<gene>
    <name type="primary">RHCG</name>
</gene>
<name>RHCG_PIG</name>
<feature type="chain" id="PRO_0000283581" description="Ammonium transporter Rh type C">
    <location>
        <begin position="1"/>
        <end position="460"/>
    </location>
</feature>
<feature type="topological domain" description="Cytoplasmic" evidence="3">
    <location>
        <begin position="1"/>
        <end position="9"/>
    </location>
</feature>
<feature type="transmembrane region" description="Helical" evidence="3">
    <location>
        <begin position="10"/>
        <end position="30"/>
    </location>
</feature>
<feature type="topological domain" description="Extracellular" evidence="3">
    <location>
        <begin position="31"/>
        <end position="61"/>
    </location>
</feature>
<feature type="transmembrane region" description="Helical" evidence="3">
    <location>
        <begin position="62"/>
        <end position="82"/>
    </location>
</feature>
<feature type="topological domain" description="Cytoplasmic" evidence="3">
    <location>
        <begin position="83"/>
        <end position="86"/>
    </location>
</feature>
<feature type="transmembrane region" description="Helical" evidence="3">
    <location>
        <begin position="87"/>
        <end position="107"/>
    </location>
</feature>
<feature type="topological domain" description="Extracellular" evidence="3">
    <location>
        <begin position="108"/>
        <end position="125"/>
    </location>
</feature>
<feature type="transmembrane region" description="Helical" evidence="3">
    <location>
        <begin position="126"/>
        <end position="145"/>
    </location>
</feature>
<feature type="topological domain" description="Cytoplasmic" evidence="3">
    <location>
        <begin position="146"/>
        <end position="151"/>
    </location>
</feature>
<feature type="transmembrane region" description="Helical" evidence="3">
    <location>
        <begin position="152"/>
        <end position="174"/>
    </location>
</feature>
<feature type="topological domain" description="Extracellular" evidence="3">
    <location>
        <begin position="175"/>
        <end position="179"/>
    </location>
</feature>
<feature type="transmembrane region" description="Helical" evidence="3">
    <location>
        <begin position="180"/>
        <end position="200"/>
    </location>
</feature>
<feature type="topological domain" description="Cytoplasmic" evidence="3">
    <location>
        <begin position="201"/>
        <end position="219"/>
    </location>
</feature>
<feature type="transmembrane region" description="Helical" evidence="3">
    <location>
        <begin position="220"/>
        <end position="240"/>
    </location>
</feature>
<feature type="topological domain" description="Extracellular" evidence="3">
    <location>
        <begin position="241"/>
        <end position="251"/>
    </location>
</feature>
<feature type="transmembrane region" description="Helical" evidence="3">
    <location>
        <begin position="252"/>
        <end position="272"/>
    </location>
</feature>
<feature type="topological domain" description="Cytoplasmic" evidence="3">
    <location>
        <begin position="273"/>
        <end position="285"/>
    </location>
</feature>
<feature type="transmembrane region" description="Helical" evidence="3">
    <location>
        <begin position="286"/>
        <end position="306"/>
    </location>
</feature>
<feature type="topological domain" description="Extracellular" evidence="3">
    <location>
        <position position="307"/>
    </location>
</feature>
<feature type="transmembrane region" description="Helical" evidence="3">
    <location>
        <begin position="308"/>
        <end position="328"/>
    </location>
</feature>
<feature type="topological domain" description="Cytoplasmic" evidence="3">
    <location>
        <begin position="329"/>
        <end position="340"/>
    </location>
</feature>
<feature type="transmembrane region" description="Helical" evidence="3">
    <location>
        <begin position="341"/>
        <end position="361"/>
    </location>
</feature>
<feature type="topological domain" description="Extracellular" evidence="3">
    <location>
        <begin position="362"/>
        <end position="396"/>
    </location>
</feature>
<feature type="transmembrane region" description="Helical" evidence="3">
    <location>
        <begin position="397"/>
        <end position="417"/>
    </location>
</feature>
<feature type="topological domain" description="Cytoplasmic" evidence="3">
    <location>
        <begin position="418"/>
        <end position="460"/>
    </location>
</feature>
<feature type="glycosylation site" description="N-linked (GlcNAc...) asparagine" evidence="3">
    <location>
        <position position="48"/>
    </location>
</feature>
<protein>
    <recommendedName>
        <fullName>Ammonium transporter Rh type C</fullName>
    </recommendedName>
    <alternativeName>
        <fullName>Rhesus blood group family type C glycoprotein</fullName>
        <shortName>Rh family type C glycoprotein</shortName>
        <shortName>Rh type C glycoprotein</shortName>
    </alternativeName>
</protein>
<keyword id="KW-0924">Ammonia transport</keyword>
<keyword id="KW-1003">Cell membrane</keyword>
<keyword id="KW-0325">Glycoprotein</keyword>
<keyword id="KW-0472">Membrane</keyword>
<keyword id="KW-1185">Reference proteome</keyword>
<keyword id="KW-0812">Transmembrane</keyword>
<keyword id="KW-1133">Transmembrane helix</keyword>
<keyword id="KW-0813">Transport</keyword>
<comment type="function">
    <text evidence="2">Ammonium transporter involved in the maintenance of acid-base homeostasis. Transports ammonium and its related derivative methylammonium across the plasma membrane of epithelial cells likely contributing to renal transepithelial ammonia transport and ammonia metabolism. Postulated to primarily mediate an electroneutral bidirectional transport of NH3 ammonia species according to a mechanism that implies interaction of an NH4(+) ion with acidic residues of the pore entry followed by dissociation of NH4(+) into NH3 and H(+). As a result NH3 transits through the central pore and is protonated on the extracellular side reforming NH4(+) (By similarity). May act as a CO2 channel providing for renal acid secretion (By similarity).</text>
</comment>
<comment type="catalytic activity">
    <reaction evidence="2">
        <text>NH4(+)(in) = NH4(+)(out)</text>
        <dbReference type="Rhea" id="RHEA:28747"/>
        <dbReference type="ChEBI" id="CHEBI:28938"/>
    </reaction>
    <physiologicalReaction direction="left-to-right" evidence="2">
        <dbReference type="Rhea" id="RHEA:28748"/>
    </physiologicalReaction>
    <physiologicalReaction direction="right-to-left" evidence="2">
        <dbReference type="Rhea" id="RHEA:28749"/>
    </physiologicalReaction>
</comment>
<comment type="catalytic activity">
    <reaction evidence="2">
        <text>methylamine(out) = methylamine(in)</text>
        <dbReference type="Rhea" id="RHEA:74391"/>
        <dbReference type="ChEBI" id="CHEBI:59338"/>
    </reaction>
    <physiologicalReaction direction="left-to-right" evidence="2">
        <dbReference type="Rhea" id="RHEA:74392"/>
    </physiologicalReaction>
</comment>
<comment type="catalytic activity">
    <reaction evidence="2">
        <text>CO2(out) = CO2(in)</text>
        <dbReference type="Rhea" id="RHEA:74891"/>
        <dbReference type="ChEBI" id="CHEBI:16526"/>
    </reaction>
    <physiologicalReaction direction="left-to-right" evidence="2">
        <dbReference type="Rhea" id="RHEA:74892"/>
    </physiologicalReaction>
</comment>
<comment type="subunit">
    <text evidence="2">Homotrimer.</text>
</comment>
<comment type="subcellular location">
    <subcellularLocation>
        <location evidence="2">Cell membrane</location>
        <topology evidence="3">Multi-pass membrane protein</topology>
    </subcellularLocation>
    <subcellularLocation>
        <location evidence="2">Apical cell membrane</location>
        <topology evidence="3">Multi-pass membrane protein</topology>
    </subcellularLocation>
    <text evidence="1">Also detected at the basolateral membrane and in subapical vesicles.</text>
</comment>
<comment type="PTM">
    <text evidence="1">N-glycosylated.</text>
</comment>
<comment type="similarity">
    <text evidence="4">Belongs to the ammonium transporter (TC 2.A.49) family. Rh subfamily.</text>
</comment>
<evidence type="ECO:0000250" key="1"/>
<evidence type="ECO:0000250" key="2">
    <source>
        <dbReference type="UniProtKB" id="Q9UBD6"/>
    </source>
</evidence>
<evidence type="ECO:0000255" key="3"/>
<evidence type="ECO:0000305" key="4"/>
<proteinExistence type="evidence at transcript level"/>
<organism>
    <name type="scientific">Sus scrofa</name>
    <name type="common">Pig</name>
    <dbReference type="NCBI Taxonomy" id="9823"/>
    <lineage>
        <taxon>Eukaryota</taxon>
        <taxon>Metazoa</taxon>
        <taxon>Chordata</taxon>
        <taxon>Craniata</taxon>
        <taxon>Vertebrata</taxon>
        <taxon>Euteleostomi</taxon>
        <taxon>Mammalia</taxon>
        <taxon>Eutheria</taxon>
        <taxon>Laurasiatheria</taxon>
        <taxon>Artiodactyla</taxon>
        <taxon>Suina</taxon>
        <taxon>Suidae</taxon>
        <taxon>Sus</taxon>
    </lineage>
</organism>
<accession>Q19KI0</accession>
<dbReference type="EMBL" id="DQ523515">
    <property type="protein sequence ID" value="ABF69687.1"/>
    <property type="molecule type" value="mRNA"/>
</dbReference>
<dbReference type="RefSeq" id="NP_001038042.1">
    <property type="nucleotide sequence ID" value="NM_001044577.1"/>
</dbReference>
<dbReference type="SMR" id="Q19KI0"/>
<dbReference type="FunCoup" id="Q19KI0">
    <property type="interactions" value="58"/>
</dbReference>
<dbReference type="STRING" id="9823.ENSSSCP00000002014"/>
<dbReference type="GlyCosmos" id="Q19KI0">
    <property type="glycosylation" value="1 site, No reported glycans"/>
</dbReference>
<dbReference type="GlyGen" id="Q19KI0">
    <property type="glycosylation" value="1 site"/>
</dbReference>
<dbReference type="PaxDb" id="9823-ENSSSCP00000002014"/>
<dbReference type="PeptideAtlas" id="Q19KI0"/>
<dbReference type="GeneID" id="733644"/>
<dbReference type="KEGG" id="ssc:733644"/>
<dbReference type="CTD" id="51458"/>
<dbReference type="eggNOG" id="KOG3796">
    <property type="taxonomic scope" value="Eukaryota"/>
</dbReference>
<dbReference type="HOGENOM" id="CLU_021386_0_1_1"/>
<dbReference type="InParanoid" id="Q19KI0"/>
<dbReference type="OrthoDB" id="534912at2759"/>
<dbReference type="Proteomes" id="UP000008227">
    <property type="component" value="Unplaced"/>
</dbReference>
<dbReference type="Proteomes" id="UP000314985">
    <property type="component" value="Unplaced"/>
</dbReference>
<dbReference type="Proteomes" id="UP000694570">
    <property type="component" value="Unplaced"/>
</dbReference>
<dbReference type="Proteomes" id="UP000694571">
    <property type="component" value="Unplaced"/>
</dbReference>
<dbReference type="Proteomes" id="UP000694720">
    <property type="component" value="Unplaced"/>
</dbReference>
<dbReference type="Proteomes" id="UP000694722">
    <property type="component" value="Unplaced"/>
</dbReference>
<dbReference type="Proteomes" id="UP000694723">
    <property type="component" value="Unplaced"/>
</dbReference>
<dbReference type="Proteomes" id="UP000694724">
    <property type="component" value="Unplaced"/>
</dbReference>
<dbReference type="Proteomes" id="UP000694725">
    <property type="component" value="Unplaced"/>
</dbReference>
<dbReference type="Proteomes" id="UP000694726">
    <property type="component" value="Unplaced"/>
</dbReference>
<dbReference type="Proteomes" id="UP000694727">
    <property type="component" value="Unplaced"/>
</dbReference>
<dbReference type="Proteomes" id="UP000694728">
    <property type="component" value="Unplaced"/>
</dbReference>
<dbReference type="GO" id="GO:0016324">
    <property type="term" value="C:apical plasma membrane"/>
    <property type="evidence" value="ECO:0000250"/>
    <property type="project" value="UniProtKB"/>
</dbReference>
<dbReference type="GO" id="GO:0016323">
    <property type="term" value="C:basolateral plasma membrane"/>
    <property type="evidence" value="ECO:0000250"/>
    <property type="project" value="UniProtKB"/>
</dbReference>
<dbReference type="GO" id="GO:0031410">
    <property type="term" value="C:cytoplasmic vesicle"/>
    <property type="evidence" value="ECO:0000250"/>
    <property type="project" value="UniProtKB"/>
</dbReference>
<dbReference type="GO" id="GO:0005886">
    <property type="term" value="C:plasma membrane"/>
    <property type="evidence" value="ECO:0000250"/>
    <property type="project" value="UniProtKB"/>
</dbReference>
<dbReference type="GO" id="GO:0008519">
    <property type="term" value="F:ammonium channel activity"/>
    <property type="evidence" value="ECO:0000250"/>
    <property type="project" value="UniProtKB"/>
</dbReference>
<dbReference type="GO" id="GO:0030506">
    <property type="term" value="F:ankyrin binding"/>
    <property type="evidence" value="ECO:0000250"/>
    <property type="project" value="UniProtKB"/>
</dbReference>
<dbReference type="GO" id="GO:0035379">
    <property type="term" value="F:carbon dioxide transmembrane transporter activity"/>
    <property type="evidence" value="ECO:0000250"/>
    <property type="project" value="UniProtKB"/>
</dbReference>
<dbReference type="GO" id="GO:0097272">
    <property type="term" value="P:ammonium homeostasis"/>
    <property type="evidence" value="ECO:0000318"/>
    <property type="project" value="GO_Central"/>
</dbReference>
<dbReference type="GO" id="GO:0072488">
    <property type="term" value="P:ammonium transmembrane transport"/>
    <property type="evidence" value="ECO:0000250"/>
    <property type="project" value="UniProtKB"/>
</dbReference>
<dbReference type="GO" id="GO:0006873">
    <property type="term" value="P:intracellular monoatomic ion homeostasis"/>
    <property type="evidence" value="ECO:0000250"/>
    <property type="project" value="UniProtKB"/>
</dbReference>
<dbReference type="GO" id="GO:0070634">
    <property type="term" value="P:transepithelial ammonium transport"/>
    <property type="evidence" value="ECO:0000250"/>
    <property type="project" value="UniProtKB"/>
</dbReference>
<dbReference type="FunFam" id="1.10.3430.10:FF:000001">
    <property type="entry name" value="Ammonium transporter Rh type C"/>
    <property type="match status" value="1"/>
</dbReference>
<dbReference type="Gene3D" id="1.10.3430.10">
    <property type="entry name" value="Ammonium transporter AmtB like domains"/>
    <property type="match status" value="1"/>
</dbReference>
<dbReference type="InterPro" id="IPR029020">
    <property type="entry name" value="Ammonium/urea_transptr"/>
</dbReference>
<dbReference type="InterPro" id="IPR024041">
    <property type="entry name" value="NH4_transpt_AmtB-like_dom"/>
</dbReference>
<dbReference type="InterPro" id="IPR002229">
    <property type="entry name" value="RhesusRHD"/>
</dbReference>
<dbReference type="PANTHER" id="PTHR11730">
    <property type="entry name" value="AMMONIUM TRANSPORTER"/>
    <property type="match status" value="1"/>
</dbReference>
<dbReference type="PANTHER" id="PTHR11730:SF30">
    <property type="entry name" value="AMMONIUM TRANSPORTER RH TYPE C"/>
    <property type="match status" value="1"/>
</dbReference>
<dbReference type="Pfam" id="PF00909">
    <property type="entry name" value="Ammonium_transp"/>
    <property type="match status" value="1"/>
</dbReference>
<dbReference type="PRINTS" id="PR00342">
    <property type="entry name" value="RHESUSRHD"/>
</dbReference>
<dbReference type="SUPFAM" id="SSF111352">
    <property type="entry name" value="Ammonium transporter"/>
    <property type="match status" value="1"/>
</dbReference>
<reference key="1">
    <citation type="submission" date="2006-05" db="EMBL/GenBank/DDBJ databases">
        <title>Identification of RhCG (Rh type C glycoprotein) homolog in pig.</title>
        <authorList>
            <person name="Chen Y."/>
            <person name="Huang C.-H."/>
        </authorList>
    </citation>
    <scope>NUCLEOTIDE SEQUENCE [MRNA]</scope>
</reference>
<sequence length="460" mass="50781">MAWNTNLRWRLPLTCLLLQVIMVILFGVFVRYDPDADAHWIDERLGRNISSDMDNEFYYRYPSFQDVHVMIFVGFGFLMTFLQRYGFSSVGFNFLLAAFGIQWALLMQGWLHSFHSGYIVLGVENLINADFCVGSVCVAFGAVLGKVSPVQLLIMTLFQVTLFSVNEFILLNLLEVKDAGGSMTIHTFGAYFGLTVTWILYRPNLYQSKERQSSVYHSDLFAMIGTLFLWMYWPSFNSAVSHHGDAQHRAAINTYCSLAACVLTSVALSSALHKKGKLDMVHIQNATLAGGVAVGTAAEMMLMPYGSLIVGFICGIISTLGFVYLTPFLESRLRIQDTCGIHNLHGMPGIIGGIVGAVTAASANTQQYGQKGLAHAFDIDATKTTWTASMQGSFQAAGLFVSLAMALVGGLIVGVILKLPFWGQPADENCFEDAIYWEIPEDQKSLVSRSEDPTLRPTEP</sequence>